<evidence type="ECO:0000255" key="1">
    <source>
        <dbReference type="HAMAP-Rule" id="MF_00120"/>
    </source>
</evidence>
<protein>
    <recommendedName>
        <fullName evidence="1">Glutamyl-tRNA(Gln) amidotransferase subunit A</fullName>
        <shortName evidence="1">Glu-ADT subunit A</shortName>
        <ecNumber evidence="1">6.3.5.7</ecNumber>
    </recommendedName>
</protein>
<organism>
    <name type="scientific">Saccharophagus degradans (strain 2-40 / ATCC 43961 / DSM 17024)</name>
    <dbReference type="NCBI Taxonomy" id="203122"/>
    <lineage>
        <taxon>Bacteria</taxon>
        <taxon>Pseudomonadati</taxon>
        <taxon>Pseudomonadota</taxon>
        <taxon>Gammaproteobacteria</taxon>
        <taxon>Cellvibrionales</taxon>
        <taxon>Cellvibrionaceae</taxon>
        <taxon>Saccharophagus</taxon>
    </lineage>
</organism>
<feature type="chain" id="PRO_0000241151" description="Glutamyl-tRNA(Gln) amidotransferase subunit A">
    <location>
        <begin position="1"/>
        <end position="484"/>
    </location>
</feature>
<feature type="active site" description="Charge relay system" evidence="1">
    <location>
        <position position="76"/>
    </location>
</feature>
<feature type="active site" description="Charge relay system" evidence="1">
    <location>
        <position position="151"/>
    </location>
</feature>
<feature type="active site" description="Acyl-ester intermediate" evidence="1">
    <location>
        <position position="175"/>
    </location>
</feature>
<accession>Q21FS8</accession>
<dbReference type="EC" id="6.3.5.7" evidence="1"/>
<dbReference type="EMBL" id="CP000282">
    <property type="protein sequence ID" value="ABD82451.1"/>
    <property type="molecule type" value="Genomic_DNA"/>
</dbReference>
<dbReference type="RefSeq" id="WP_011469667.1">
    <property type="nucleotide sequence ID" value="NC_007912.1"/>
</dbReference>
<dbReference type="SMR" id="Q21FS8"/>
<dbReference type="STRING" id="203122.Sde_3194"/>
<dbReference type="GeneID" id="98614821"/>
<dbReference type="KEGG" id="sde:Sde_3194"/>
<dbReference type="eggNOG" id="COG0154">
    <property type="taxonomic scope" value="Bacteria"/>
</dbReference>
<dbReference type="HOGENOM" id="CLU_009600_0_3_6"/>
<dbReference type="OrthoDB" id="9811471at2"/>
<dbReference type="Proteomes" id="UP000001947">
    <property type="component" value="Chromosome"/>
</dbReference>
<dbReference type="GO" id="GO:0030956">
    <property type="term" value="C:glutamyl-tRNA(Gln) amidotransferase complex"/>
    <property type="evidence" value="ECO:0007669"/>
    <property type="project" value="InterPro"/>
</dbReference>
<dbReference type="GO" id="GO:0005524">
    <property type="term" value="F:ATP binding"/>
    <property type="evidence" value="ECO:0007669"/>
    <property type="project" value="UniProtKB-KW"/>
</dbReference>
<dbReference type="GO" id="GO:0050567">
    <property type="term" value="F:glutaminyl-tRNA synthase (glutamine-hydrolyzing) activity"/>
    <property type="evidence" value="ECO:0007669"/>
    <property type="project" value="UniProtKB-UniRule"/>
</dbReference>
<dbReference type="GO" id="GO:0006412">
    <property type="term" value="P:translation"/>
    <property type="evidence" value="ECO:0007669"/>
    <property type="project" value="UniProtKB-UniRule"/>
</dbReference>
<dbReference type="Gene3D" id="3.90.1300.10">
    <property type="entry name" value="Amidase signature (AS) domain"/>
    <property type="match status" value="1"/>
</dbReference>
<dbReference type="HAMAP" id="MF_00120">
    <property type="entry name" value="GatA"/>
    <property type="match status" value="1"/>
</dbReference>
<dbReference type="InterPro" id="IPR000120">
    <property type="entry name" value="Amidase"/>
</dbReference>
<dbReference type="InterPro" id="IPR020556">
    <property type="entry name" value="Amidase_CS"/>
</dbReference>
<dbReference type="InterPro" id="IPR023631">
    <property type="entry name" value="Amidase_dom"/>
</dbReference>
<dbReference type="InterPro" id="IPR036928">
    <property type="entry name" value="AS_sf"/>
</dbReference>
<dbReference type="InterPro" id="IPR004412">
    <property type="entry name" value="GatA"/>
</dbReference>
<dbReference type="NCBIfam" id="TIGR00132">
    <property type="entry name" value="gatA"/>
    <property type="match status" value="1"/>
</dbReference>
<dbReference type="PANTHER" id="PTHR11895:SF151">
    <property type="entry name" value="GLUTAMYL-TRNA(GLN) AMIDOTRANSFERASE SUBUNIT A"/>
    <property type="match status" value="1"/>
</dbReference>
<dbReference type="PANTHER" id="PTHR11895">
    <property type="entry name" value="TRANSAMIDASE"/>
    <property type="match status" value="1"/>
</dbReference>
<dbReference type="Pfam" id="PF01425">
    <property type="entry name" value="Amidase"/>
    <property type="match status" value="1"/>
</dbReference>
<dbReference type="SUPFAM" id="SSF75304">
    <property type="entry name" value="Amidase signature (AS) enzymes"/>
    <property type="match status" value="1"/>
</dbReference>
<dbReference type="PROSITE" id="PS00571">
    <property type="entry name" value="AMIDASES"/>
    <property type="match status" value="1"/>
</dbReference>
<keyword id="KW-0067">ATP-binding</keyword>
<keyword id="KW-0436">Ligase</keyword>
<keyword id="KW-0547">Nucleotide-binding</keyword>
<keyword id="KW-0648">Protein biosynthesis</keyword>
<keyword id="KW-1185">Reference proteome</keyword>
<sequence>MHNLTIAEIIQGLKNKSFSSVEITQHFLNRIKTLDTEYNSFITLTEEQALAQATAADARLAAGDAPALCGVPLAHKDIFCTNGVRTSCGSKMLDNFVPPYDATVVTNYSQDGVVILGKTNMDEFAMGSSNETSYYGPVKNPWDTNCVPGGSSGGSAAAVAARLVPGATATDTGGSIRQPAALCGITGIKPTYGRVSRWGMIAFASSLDQAGTMTRTAEDAALMLQSMASYDRKDSTCVDHPIDDYSVNLNAPLAGLKIGIPKEYFGEGLNPGTAEAVQAAIKTYEAMGATVQEVSLPHTHLAVPAYYVIAPAECSANLSRFDGVRYGHRCDNPKDLEDLYRRSRGEGFGEEVKRRILVGTYALSAGFYDAYYRKAQQVRRLIKQDFVDVFSQVDVILGPTSPSPAFEFGSKGSDPVAMYLEDIYTIATNLAGLPGMSIPCGQVDGKPVGLQLIGNYFAEAKLLNIAHKFQTETDFHTQAPAAIK</sequence>
<proteinExistence type="inferred from homology"/>
<comment type="function">
    <text evidence="1">Allows the formation of correctly charged Gln-tRNA(Gln) through the transamidation of misacylated Glu-tRNA(Gln) in organisms which lack glutaminyl-tRNA synthetase. The reaction takes place in the presence of glutamine and ATP through an activated gamma-phospho-Glu-tRNA(Gln).</text>
</comment>
<comment type="catalytic activity">
    <reaction evidence="1">
        <text>L-glutamyl-tRNA(Gln) + L-glutamine + ATP + H2O = L-glutaminyl-tRNA(Gln) + L-glutamate + ADP + phosphate + H(+)</text>
        <dbReference type="Rhea" id="RHEA:17521"/>
        <dbReference type="Rhea" id="RHEA-COMP:9681"/>
        <dbReference type="Rhea" id="RHEA-COMP:9684"/>
        <dbReference type="ChEBI" id="CHEBI:15377"/>
        <dbReference type="ChEBI" id="CHEBI:15378"/>
        <dbReference type="ChEBI" id="CHEBI:29985"/>
        <dbReference type="ChEBI" id="CHEBI:30616"/>
        <dbReference type="ChEBI" id="CHEBI:43474"/>
        <dbReference type="ChEBI" id="CHEBI:58359"/>
        <dbReference type="ChEBI" id="CHEBI:78520"/>
        <dbReference type="ChEBI" id="CHEBI:78521"/>
        <dbReference type="ChEBI" id="CHEBI:456216"/>
        <dbReference type="EC" id="6.3.5.7"/>
    </reaction>
</comment>
<comment type="subunit">
    <text evidence="1">Heterotrimer of A, B and C subunits.</text>
</comment>
<comment type="similarity">
    <text evidence="1">Belongs to the amidase family. GatA subfamily.</text>
</comment>
<gene>
    <name evidence="1" type="primary">gatA</name>
    <name type="ordered locus">Sde_3194</name>
</gene>
<name>GATA_SACD2</name>
<reference key="1">
    <citation type="journal article" date="2008" name="PLoS Genet.">
        <title>Complete genome sequence of the complex carbohydrate-degrading marine bacterium, Saccharophagus degradans strain 2-40 T.</title>
        <authorList>
            <person name="Weiner R.M."/>
            <person name="Taylor L.E. II"/>
            <person name="Henrissat B."/>
            <person name="Hauser L."/>
            <person name="Land M."/>
            <person name="Coutinho P.M."/>
            <person name="Rancurel C."/>
            <person name="Saunders E.H."/>
            <person name="Longmire A.G."/>
            <person name="Zhang H."/>
            <person name="Bayer E.A."/>
            <person name="Gilbert H.J."/>
            <person name="Larimer F."/>
            <person name="Zhulin I.B."/>
            <person name="Ekborg N.A."/>
            <person name="Lamed R."/>
            <person name="Richardson P.M."/>
            <person name="Borovok I."/>
            <person name="Hutcheson S."/>
        </authorList>
    </citation>
    <scope>NUCLEOTIDE SEQUENCE [LARGE SCALE GENOMIC DNA]</scope>
    <source>
        <strain>2-40 / ATCC 43961 / DSM 17024</strain>
    </source>
</reference>